<name>PGLRC_ASPAC</name>
<sequence>MVRQLALACGLLAAVAVQAAPAEPAHPMVTEAPDASLLHKRATTCTFSGSEGASKVSKSKTACSTIYLSALAVPSGTTLDLKDLNDGTHVIFEGETTFGYEEWEGPLVSVSGTDITVEGASGAVLNGDGSRWWDGEGGNGGKTKPKFFAAHDLTSSTIKSIYIENSPVQVFSIDGATDLTLTDITIDNTDGDTDDLAANTDGFDIGESTDITITGAKVYNQDDCVAINSGENIYFSASVCSGGHGLSIGSVGGRDDNTVKNVTFYDVNVLKSQQAIRIKAIYGDTGSISDITYHEIAFSDATDYGIVIEQNYDDTSKTPTTGVPITDFTLENVIGTCADDDCTEVYIACGSGACSDWSWSSVSVTGGKVSSKCLNVPSGISCDL</sequence>
<gene>
    <name type="primary">pgaC</name>
    <name type="synonym">pg3</name>
</gene>
<reference key="1">
    <citation type="submission" date="2003-08" db="EMBL/GenBank/DDBJ databases">
        <title>Molecular and biochemical characterization of three polygalacturonases from the filamentous fungus Aspergillus aculeatus.</title>
        <authorList>
            <person name="Schnorr K.M."/>
            <person name="Kauppinen S."/>
        </authorList>
    </citation>
    <scope>NUCLEOTIDE SEQUENCE [MRNA]</scope>
</reference>
<feature type="signal peptide" evidence="2">
    <location>
        <begin position="1"/>
        <end position="19"/>
    </location>
</feature>
<feature type="propeptide" id="PRO_0000393658" evidence="2">
    <location>
        <begin position="20"/>
        <end position="40"/>
    </location>
</feature>
<feature type="chain" id="PRO_0000393659" description="Probable endopolygalacturonase C">
    <location>
        <begin position="41"/>
        <end position="384"/>
    </location>
</feature>
<feature type="repeat" description="PbH1 1">
    <location>
        <begin position="176"/>
        <end position="207"/>
    </location>
</feature>
<feature type="repeat" description="PbH1 2">
    <location>
        <begin position="208"/>
        <end position="229"/>
    </location>
</feature>
<feature type="repeat" description="PbH1 3">
    <location>
        <begin position="254"/>
        <end position="280"/>
    </location>
</feature>
<feature type="repeat" description="PbH1 4">
    <location>
        <begin position="288"/>
        <end position="310"/>
    </location>
</feature>
<feature type="active site" description="Proton donor" evidence="1">
    <location>
        <position position="222"/>
    </location>
</feature>
<feature type="active site" evidence="1">
    <location>
        <position position="244"/>
    </location>
</feature>
<feature type="glycosylation site" description="N-linked (GlcNAc...) asparagine" evidence="2">
    <location>
        <position position="261"/>
    </location>
</feature>
<feature type="disulfide bond" evidence="1">
    <location>
        <begin position="45"/>
        <end position="63"/>
    </location>
</feature>
<feature type="disulfide bond" evidence="1">
    <location>
        <begin position="224"/>
        <end position="240"/>
    </location>
</feature>
<feature type="disulfide bond" evidence="1">
    <location>
        <begin position="349"/>
        <end position="354"/>
    </location>
</feature>
<feature type="disulfide bond" evidence="1">
    <location>
        <begin position="373"/>
        <end position="382"/>
    </location>
</feature>
<evidence type="ECO:0000250" key="1"/>
<evidence type="ECO:0000255" key="2"/>
<evidence type="ECO:0000305" key="3"/>
<accession>Q70HJ3</accession>
<proteinExistence type="evidence at transcript level"/>
<organism>
    <name type="scientific">Aspergillus aculeatus</name>
    <dbReference type="NCBI Taxonomy" id="5053"/>
    <lineage>
        <taxon>Eukaryota</taxon>
        <taxon>Fungi</taxon>
        <taxon>Dikarya</taxon>
        <taxon>Ascomycota</taxon>
        <taxon>Pezizomycotina</taxon>
        <taxon>Eurotiomycetes</taxon>
        <taxon>Eurotiomycetidae</taxon>
        <taxon>Eurotiales</taxon>
        <taxon>Aspergillaceae</taxon>
        <taxon>Aspergillus</taxon>
        <taxon>Aspergillus subgen. Circumdati</taxon>
    </lineage>
</organism>
<dbReference type="EC" id="3.2.1.15"/>
<dbReference type="EMBL" id="AJ581482">
    <property type="protein sequence ID" value="CAE46195.1"/>
    <property type="molecule type" value="mRNA"/>
</dbReference>
<dbReference type="SMR" id="Q70HJ3"/>
<dbReference type="CAZy" id="GH28">
    <property type="family name" value="Glycoside Hydrolase Family 28"/>
</dbReference>
<dbReference type="GlyCosmos" id="Q70HJ3">
    <property type="glycosylation" value="1 site, No reported glycans"/>
</dbReference>
<dbReference type="VEuPathDB" id="FungiDB:ASPACDRAFT_36925"/>
<dbReference type="GO" id="GO:0005576">
    <property type="term" value="C:extracellular region"/>
    <property type="evidence" value="ECO:0000250"/>
    <property type="project" value="UniProtKB"/>
</dbReference>
<dbReference type="GO" id="GO:0004650">
    <property type="term" value="F:polygalacturonase activity"/>
    <property type="evidence" value="ECO:0000250"/>
    <property type="project" value="UniProtKB"/>
</dbReference>
<dbReference type="GO" id="GO:0071555">
    <property type="term" value="P:cell wall organization"/>
    <property type="evidence" value="ECO:0007669"/>
    <property type="project" value="UniProtKB-KW"/>
</dbReference>
<dbReference type="GO" id="GO:0045490">
    <property type="term" value="P:pectin catabolic process"/>
    <property type="evidence" value="ECO:0000250"/>
    <property type="project" value="UniProtKB"/>
</dbReference>
<dbReference type="FunFam" id="2.160.20.10:FF:000002">
    <property type="entry name" value="Endopolygalacturonase D"/>
    <property type="match status" value="1"/>
</dbReference>
<dbReference type="Gene3D" id="2.160.20.10">
    <property type="entry name" value="Single-stranded right-handed beta-helix, Pectin lyase-like"/>
    <property type="match status" value="1"/>
</dbReference>
<dbReference type="InterPro" id="IPR000743">
    <property type="entry name" value="Glyco_hydro_28"/>
</dbReference>
<dbReference type="InterPro" id="IPR050434">
    <property type="entry name" value="Glycosyl_hydrlase_28"/>
</dbReference>
<dbReference type="InterPro" id="IPR006626">
    <property type="entry name" value="PbH1"/>
</dbReference>
<dbReference type="InterPro" id="IPR012334">
    <property type="entry name" value="Pectin_lyas_fold"/>
</dbReference>
<dbReference type="InterPro" id="IPR011050">
    <property type="entry name" value="Pectin_lyase_fold/virulence"/>
</dbReference>
<dbReference type="PANTHER" id="PTHR31884">
    <property type="entry name" value="POLYGALACTURONASE"/>
    <property type="match status" value="1"/>
</dbReference>
<dbReference type="PANTHER" id="PTHR31884:SF1">
    <property type="entry name" value="POLYGALACTURONASE"/>
    <property type="match status" value="1"/>
</dbReference>
<dbReference type="Pfam" id="PF00295">
    <property type="entry name" value="Glyco_hydro_28"/>
    <property type="match status" value="1"/>
</dbReference>
<dbReference type="SMART" id="SM00710">
    <property type="entry name" value="PbH1"/>
    <property type="match status" value="4"/>
</dbReference>
<dbReference type="SUPFAM" id="SSF51126">
    <property type="entry name" value="Pectin lyase-like"/>
    <property type="match status" value="1"/>
</dbReference>
<keyword id="KW-0961">Cell wall biogenesis/degradation</keyword>
<keyword id="KW-1015">Disulfide bond</keyword>
<keyword id="KW-0325">Glycoprotein</keyword>
<keyword id="KW-0326">Glycosidase</keyword>
<keyword id="KW-0378">Hydrolase</keyword>
<keyword id="KW-0677">Repeat</keyword>
<keyword id="KW-0964">Secreted</keyword>
<keyword id="KW-0732">Signal</keyword>
<keyword id="KW-0865">Zymogen</keyword>
<protein>
    <recommendedName>
        <fullName>Probable endopolygalacturonase C</fullName>
        <shortName>PGC</shortName>
        <ecNumber>3.2.1.15</ecNumber>
    </recommendedName>
    <alternativeName>
        <fullName>Pectinase 3</fullName>
    </alternativeName>
    <alternativeName>
        <fullName>Pectinase C</fullName>
    </alternativeName>
    <alternativeName>
        <fullName>Polygalacturonase C</fullName>
    </alternativeName>
    <alternativeName>
        <fullName>Polygalacturonase III</fullName>
        <shortName>PG-III</shortName>
    </alternativeName>
</protein>
<comment type="function">
    <text evidence="1">Involved in maceration and soft-rotting of plant tissue. Hydrolyzes the 1,4-alpha glycosidic bonds of de-esterified pectate in the smooth region of the plant cell wall (By similarity).</text>
</comment>
<comment type="catalytic activity">
    <reaction>
        <text>(1,4-alpha-D-galacturonosyl)n+m + H2O = (1,4-alpha-D-galacturonosyl)n + (1,4-alpha-D-galacturonosyl)m.</text>
        <dbReference type="EC" id="3.2.1.15"/>
    </reaction>
</comment>
<comment type="subcellular location">
    <subcellularLocation>
        <location evidence="1">Secreted</location>
    </subcellularLocation>
</comment>
<comment type="similarity">
    <text evidence="3">Belongs to the glycosyl hydrolase 28 family.</text>
</comment>